<name>LPLT_SHIDS</name>
<dbReference type="EMBL" id="CP000034">
    <property type="protein sequence ID" value="ABB63069.1"/>
    <property type="molecule type" value="Genomic_DNA"/>
</dbReference>
<dbReference type="RefSeq" id="WP_000004606.1">
    <property type="nucleotide sequence ID" value="NC_007606.1"/>
</dbReference>
<dbReference type="RefSeq" id="YP_404560.1">
    <property type="nucleotide sequence ID" value="NC_007606.1"/>
</dbReference>
<dbReference type="SMR" id="Q32C86"/>
<dbReference type="STRING" id="300267.SDY_3052"/>
<dbReference type="EnsemblBacteria" id="ABB63069">
    <property type="protein sequence ID" value="ABB63069"/>
    <property type="gene ID" value="SDY_3052"/>
</dbReference>
<dbReference type="KEGG" id="sdy:SDY_3052"/>
<dbReference type="PATRIC" id="fig|300267.13.peg.3657"/>
<dbReference type="HOGENOM" id="CLU_047399_0_0_6"/>
<dbReference type="Proteomes" id="UP000002716">
    <property type="component" value="Chromosome"/>
</dbReference>
<dbReference type="GO" id="GO:0005886">
    <property type="term" value="C:plasma membrane"/>
    <property type="evidence" value="ECO:0007669"/>
    <property type="project" value="UniProtKB-SubCell"/>
</dbReference>
<dbReference type="GO" id="GO:0051978">
    <property type="term" value="F:lysophospholipid:sodium symporter activity"/>
    <property type="evidence" value="ECO:0007669"/>
    <property type="project" value="InterPro"/>
</dbReference>
<dbReference type="CDD" id="cd06173">
    <property type="entry name" value="MFS_MefA_like"/>
    <property type="match status" value="1"/>
</dbReference>
<dbReference type="FunFam" id="1.20.1250.20:FF:000091">
    <property type="entry name" value="Lysophospholipid transporter LplT"/>
    <property type="match status" value="1"/>
</dbReference>
<dbReference type="Gene3D" id="1.20.1250.20">
    <property type="entry name" value="MFS general substrate transporter like domains"/>
    <property type="match status" value="1"/>
</dbReference>
<dbReference type="HAMAP" id="MF_01585">
    <property type="entry name" value="MFS_LplT"/>
    <property type="match status" value="1"/>
</dbReference>
<dbReference type="InterPro" id="IPR023727">
    <property type="entry name" value="LysoPLipid__transptr_LplT"/>
</dbReference>
<dbReference type="InterPro" id="IPR011701">
    <property type="entry name" value="MFS"/>
</dbReference>
<dbReference type="InterPro" id="IPR036259">
    <property type="entry name" value="MFS_trans_sf"/>
</dbReference>
<dbReference type="NCBIfam" id="NF008397">
    <property type="entry name" value="PRK11195.1"/>
    <property type="match status" value="1"/>
</dbReference>
<dbReference type="PANTHER" id="PTHR43266">
    <property type="entry name" value="MACROLIDE-EFFLUX PROTEIN"/>
    <property type="match status" value="1"/>
</dbReference>
<dbReference type="PANTHER" id="PTHR43266:SF2">
    <property type="entry name" value="MAJOR FACILITATOR SUPERFAMILY (MFS) PROFILE DOMAIN-CONTAINING PROTEIN"/>
    <property type="match status" value="1"/>
</dbReference>
<dbReference type="Pfam" id="PF07690">
    <property type="entry name" value="MFS_1"/>
    <property type="match status" value="1"/>
</dbReference>
<dbReference type="SUPFAM" id="SSF103473">
    <property type="entry name" value="MFS general substrate transporter"/>
    <property type="match status" value="1"/>
</dbReference>
<accession>Q32C86</accession>
<feature type="chain" id="PRO_0000309835" description="Lysophospholipid transporter LplT">
    <location>
        <begin position="1"/>
        <end position="397"/>
    </location>
</feature>
<feature type="topological domain" description="Periplasmic" evidence="1">
    <location>
        <begin position="1"/>
        <end position="17"/>
    </location>
</feature>
<feature type="transmembrane region" description="Helical" evidence="1">
    <location>
        <begin position="18"/>
        <end position="38"/>
    </location>
</feature>
<feature type="topological domain" description="Cytoplasmic" evidence="1">
    <location>
        <begin position="39"/>
        <end position="52"/>
    </location>
</feature>
<feature type="transmembrane region" description="Helical" evidence="1">
    <location>
        <begin position="53"/>
        <end position="73"/>
    </location>
</feature>
<feature type="topological domain" description="Periplasmic" evidence="1">
    <location>
        <begin position="74"/>
        <end position="90"/>
    </location>
</feature>
<feature type="transmembrane region" description="Helical" evidence="1">
    <location>
        <begin position="91"/>
        <end position="111"/>
    </location>
</feature>
<feature type="topological domain" description="Cytoplasmic" evidence="1">
    <location>
        <begin position="112"/>
        <end position="144"/>
    </location>
</feature>
<feature type="transmembrane region" description="Helical" evidence="1">
    <location>
        <begin position="145"/>
        <end position="165"/>
    </location>
</feature>
<feature type="topological domain" description="Periplasmic" evidence="1">
    <location>
        <position position="166"/>
    </location>
</feature>
<feature type="transmembrane region" description="Helical" evidence="1">
    <location>
        <begin position="167"/>
        <end position="187"/>
    </location>
</feature>
<feature type="topological domain" description="Cytoplasmic" evidence="1">
    <location>
        <begin position="188"/>
        <end position="226"/>
    </location>
</feature>
<feature type="transmembrane region" description="Helical" evidence="1">
    <location>
        <begin position="227"/>
        <end position="247"/>
    </location>
</feature>
<feature type="topological domain" description="Periplasmic" evidence="1">
    <location>
        <begin position="248"/>
        <end position="256"/>
    </location>
</feature>
<feature type="transmembrane region" description="Helical" evidence="1">
    <location>
        <begin position="257"/>
        <end position="277"/>
    </location>
</feature>
<feature type="topological domain" description="Cytoplasmic" evidence="1">
    <location>
        <begin position="278"/>
        <end position="280"/>
    </location>
</feature>
<feature type="transmembrane region" description="Helical" evidence="1">
    <location>
        <begin position="281"/>
        <end position="301"/>
    </location>
</feature>
<feature type="topological domain" description="Periplasmic" evidence="1">
    <location>
        <begin position="302"/>
        <end position="304"/>
    </location>
</feature>
<feature type="transmembrane region" description="Helical" evidence="1">
    <location>
        <begin position="305"/>
        <end position="325"/>
    </location>
</feature>
<feature type="topological domain" description="Cytoplasmic" evidence="1">
    <location>
        <begin position="326"/>
        <end position="343"/>
    </location>
</feature>
<feature type="transmembrane region" description="Helical" evidence="1">
    <location>
        <begin position="344"/>
        <end position="364"/>
    </location>
</feature>
<feature type="topological domain" description="Periplasmic" evidence="1">
    <location>
        <begin position="365"/>
        <end position="366"/>
    </location>
</feature>
<feature type="transmembrane region" description="Helical" evidence="1">
    <location>
        <begin position="367"/>
        <end position="387"/>
    </location>
</feature>
<feature type="topological domain" description="Cytoplasmic" evidence="1">
    <location>
        <begin position="388"/>
        <end position="397"/>
    </location>
</feature>
<keyword id="KW-0997">Cell inner membrane</keyword>
<keyword id="KW-1003">Cell membrane</keyword>
<keyword id="KW-0445">Lipid transport</keyword>
<keyword id="KW-0472">Membrane</keyword>
<keyword id="KW-1185">Reference proteome</keyword>
<keyword id="KW-0812">Transmembrane</keyword>
<keyword id="KW-1133">Transmembrane helix</keyword>
<keyword id="KW-0813">Transport</keyword>
<organism>
    <name type="scientific">Shigella dysenteriae serotype 1 (strain Sd197)</name>
    <dbReference type="NCBI Taxonomy" id="300267"/>
    <lineage>
        <taxon>Bacteria</taxon>
        <taxon>Pseudomonadati</taxon>
        <taxon>Pseudomonadota</taxon>
        <taxon>Gammaproteobacteria</taxon>
        <taxon>Enterobacterales</taxon>
        <taxon>Enterobacteriaceae</taxon>
        <taxon>Shigella</taxon>
    </lineage>
</organism>
<reference key="1">
    <citation type="journal article" date="2005" name="Nucleic Acids Res.">
        <title>Genome dynamics and diversity of Shigella species, the etiologic agents of bacillary dysentery.</title>
        <authorList>
            <person name="Yang F."/>
            <person name="Yang J."/>
            <person name="Zhang X."/>
            <person name="Chen L."/>
            <person name="Jiang Y."/>
            <person name="Yan Y."/>
            <person name="Tang X."/>
            <person name="Wang J."/>
            <person name="Xiong Z."/>
            <person name="Dong J."/>
            <person name="Xue Y."/>
            <person name="Zhu Y."/>
            <person name="Xu X."/>
            <person name="Sun L."/>
            <person name="Chen S."/>
            <person name="Nie H."/>
            <person name="Peng J."/>
            <person name="Xu J."/>
            <person name="Wang Y."/>
            <person name="Yuan Z."/>
            <person name="Wen Y."/>
            <person name="Yao Z."/>
            <person name="Shen Y."/>
            <person name="Qiang B."/>
            <person name="Hou Y."/>
            <person name="Yu J."/>
            <person name="Jin Q."/>
        </authorList>
    </citation>
    <scope>NUCLEOTIDE SEQUENCE [LARGE SCALE GENOMIC DNA]</scope>
    <source>
        <strain>Sd197</strain>
    </source>
</reference>
<gene>
    <name evidence="1" type="primary">lplT</name>
    <name type="ordered locus">SDY_3052</name>
</gene>
<comment type="function">
    <text evidence="1">Catalyzes the facilitated diffusion of 2-acyl-glycero-3-phosphoethanolamine (2-acyl-GPE) into the cell.</text>
</comment>
<comment type="subcellular location">
    <subcellularLocation>
        <location evidence="1">Cell inner membrane</location>
        <topology evidence="1">Multi-pass membrane protein</topology>
    </subcellularLocation>
</comment>
<comment type="similarity">
    <text evidence="1">Belongs to the major facilitator superfamily. LplT (TC 2.A.1.42) family.</text>
</comment>
<proteinExistence type="inferred from homology"/>
<sequence length="397" mass="41570">MSESVHTNTSLWSKGMKAVIVAQFLSAFGDNALLFATLALLKAQFYPEWSQPILQMVFVGAYILFAPFVGQVADSFAKGRVMMFANGLKLLGAASICFGINPFLGYTLVGVGAAAYSPAKYGILGELTTGSKLVKANGLMEASTIAAILLGSVAGGVLADWHVLVALAACALAYGGAVVANIYIPKLAAARPGQSWNLINMTRSFLNACTSLWCNGETRFSLVGTSLFWGAGVTLRFLLVLWVPVALGITDNATPTYLNAMVAIGIVVGAGAAAKLVTLETVSRCMPAGILIGVVVLIFSLQHELLPAYALLMLIGVLGGFFVVPLNALLQERGKKSVGAGNAIAVQNLGENSAMLLMLGIYSLAVMVGIPVVPIGIGFGALFALAITALWIWQRRH</sequence>
<protein>
    <recommendedName>
        <fullName evidence="1">Lysophospholipid transporter LplT</fullName>
    </recommendedName>
</protein>
<evidence type="ECO:0000255" key="1">
    <source>
        <dbReference type="HAMAP-Rule" id="MF_01585"/>
    </source>
</evidence>